<organism>
    <name type="scientific">Rattus norvegicus</name>
    <name type="common">Rat</name>
    <dbReference type="NCBI Taxonomy" id="10116"/>
    <lineage>
        <taxon>Eukaryota</taxon>
        <taxon>Metazoa</taxon>
        <taxon>Chordata</taxon>
        <taxon>Craniata</taxon>
        <taxon>Vertebrata</taxon>
        <taxon>Euteleostomi</taxon>
        <taxon>Mammalia</taxon>
        <taxon>Eutheria</taxon>
        <taxon>Euarchontoglires</taxon>
        <taxon>Glires</taxon>
        <taxon>Rodentia</taxon>
        <taxon>Myomorpha</taxon>
        <taxon>Muroidea</taxon>
        <taxon>Muridae</taxon>
        <taxon>Murinae</taxon>
        <taxon>Rattus</taxon>
    </lineage>
</organism>
<keyword id="KW-0966">Cell projection</keyword>
<keyword id="KW-0969">Cilium</keyword>
<keyword id="KW-0175">Coiled coil</keyword>
<keyword id="KW-0963">Cytoplasm</keyword>
<keyword id="KW-0206">Cytoskeleton</keyword>
<keyword id="KW-0282">Flagellum</keyword>
<keyword id="KW-0333">Golgi apparatus</keyword>
<keyword id="KW-0493">Microtubule</keyword>
<keyword id="KW-1185">Reference proteome</keyword>
<dbReference type="EMBL" id="BC099759">
    <property type="protein sequence ID" value="AAH99759.1"/>
    <property type="molecule type" value="mRNA"/>
</dbReference>
<dbReference type="RefSeq" id="NP_001034119.1">
    <property type="nucleotide sequence ID" value="NM_001039030.1"/>
</dbReference>
<dbReference type="SMR" id="Q499U4"/>
<dbReference type="FunCoup" id="Q499U4">
    <property type="interactions" value="550"/>
</dbReference>
<dbReference type="IntAct" id="Q499U4">
    <property type="interactions" value="1"/>
</dbReference>
<dbReference type="STRING" id="10116.ENSRNOP00000031180"/>
<dbReference type="PhosphoSitePlus" id="Q499U4"/>
<dbReference type="PaxDb" id="10116-ENSRNOP00000031180"/>
<dbReference type="Ensembl" id="ENSRNOT00000029999.7">
    <property type="protein sequence ID" value="ENSRNOP00000031180.5"/>
    <property type="gene ID" value="ENSRNOG00000026964.7"/>
</dbReference>
<dbReference type="GeneID" id="361438"/>
<dbReference type="KEGG" id="rno:361438"/>
<dbReference type="UCSC" id="RGD:1307817">
    <property type="organism name" value="rat"/>
</dbReference>
<dbReference type="AGR" id="RGD:1307817"/>
<dbReference type="CTD" id="2622"/>
<dbReference type="RGD" id="1307817">
    <property type="gene designation" value="Gas8"/>
</dbReference>
<dbReference type="eggNOG" id="ENOG502QQDA">
    <property type="taxonomic scope" value="Eukaryota"/>
</dbReference>
<dbReference type="GeneTree" id="ENSGT00390000009477"/>
<dbReference type="HOGENOM" id="CLU_045343_0_0_1"/>
<dbReference type="InParanoid" id="Q499U4"/>
<dbReference type="OMA" id="MKHLQYE"/>
<dbReference type="OrthoDB" id="62093at9989"/>
<dbReference type="PhylomeDB" id="Q499U4"/>
<dbReference type="PRO" id="PR:Q499U4"/>
<dbReference type="Proteomes" id="UP000002494">
    <property type="component" value="Chromosome 19"/>
</dbReference>
<dbReference type="Bgee" id="ENSRNOG00000026964">
    <property type="expression patterns" value="Expressed in testis and 19 other cell types or tissues"/>
</dbReference>
<dbReference type="GO" id="GO:0097729">
    <property type="term" value="C:9+2 motile cilium"/>
    <property type="evidence" value="ECO:0000266"/>
    <property type="project" value="RGD"/>
</dbReference>
<dbReference type="GO" id="GO:0005930">
    <property type="term" value="C:axoneme"/>
    <property type="evidence" value="ECO:0000250"/>
    <property type="project" value="UniProtKB"/>
</dbReference>
<dbReference type="GO" id="GO:0036064">
    <property type="term" value="C:ciliary basal body"/>
    <property type="evidence" value="ECO:0000250"/>
    <property type="project" value="UniProtKB"/>
</dbReference>
<dbReference type="GO" id="GO:0005929">
    <property type="term" value="C:cilium"/>
    <property type="evidence" value="ECO:0000250"/>
    <property type="project" value="UniProtKB"/>
</dbReference>
<dbReference type="GO" id="GO:0005737">
    <property type="term" value="C:cytoplasm"/>
    <property type="evidence" value="ECO:0000250"/>
    <property type="project" value="UniProtKB"/>
</dbReference>
<dbReference type="GO" id="GO:0005576">
    <property type="term" value="C:extracellular region"/>
    <property type="evidence" value="ECO:0007669"/>
    <property type="project" value="GOC"/>
</dbReference>
<dbReference type="GO" id="GO:0097386">
    <property type="term" value="C:glial cell projection"/>
    <property type="evidence" value="ECO:0000266"/>
    <property type="project" value="RGD"/>
</dbReference>
<dbReference type="GO" id="GO:0005794">
    <property type="term" value="C:Golgi apparatus"/>
    <property type="evidence" value="ECO:0000266"/>
    <property type="project" value="RGD"/>
</dbReference>
<dbReference type="GO" id="GO:0005874">
    <property type="term" value="C:microtubule"/>
    <property type="evidence" value="ECO:0000266"/>
    <property type="project" value="RGD"/>
</dbReference>
<dbReference type="GO" id="GO:0015630">
    <property type="term" value="C:microtubule cytoskeleton"/>
    <property type="evidence" value="ECO:0000250"/>
    <property type="project" value="UniProtKB"/>
</dbReference>
<dbReference type="GO" id="GO:0031514">
    <property type="term" value="C:motile cilium"/>
    <property type="evidence" value="ECO:0000250"/>
    <property type="project" value="UniProtKB"/>
</dbReference>
<dbReference type="GO" id="GO:0036126">
    <property type="term" value="C:sperm flagellum"/>
    <property type="evidence" value="ECO:0000250"/>
    <property type="project" value="UniProtKB"/>
</dbReference>
<dbReference type="GO" id="GO:0008017">
    <property type="term" value="F:microtubule binding"/>
    <property type="evidence" value="ECO:0000250"/>
    <property type="project" value="UniProtKB"/>
</dbReference>
<dbReference type="GO" id="GO:0031267">
    <property type="term" value="F:small GTPase binding"/>
    <property type="evidence" value="ECO:0000266"/>
    <property type="project" value="RGD"/>
</dbReference>
<dbReference type="GO" id="GO:0035082">
    <property type="term" value="P:axoneme assembly"/>
    <property type="evidence" value="ECO:0000250"/>
    <property type="project" value="UniProtKB"/>
</dbReference>
<dbReference type="GO" id="GO:0007420">
    <property type="term" value="P:brain development"/>
    <property type="evidence" value="ECO:0000266"/>
    <property type="project" value="RGD"/>
</dbReference>
<dbReference type="GO" id="GO:0060294">
    <property type="term" value="P:cilium movement involved in cell motility"/>
    <property type="evidence" value="ECO:0000266"/>
    <property type="project" value="RGD"/>
</dbReference>
<dbReference type="GO" id="GO:0007368">
    <property type="term" value="P:determination of left/right symmetry"/>
    <property type="evidence" value="ECO:0000266"/>
    <property type="project" value="RGD"/>
</dbReference>
<dbReference type="GO" id="GO:0003351">
    <property type="term" value="P:epithelial cilium movement involved in extracellular fluid movement"/>
    <property type="evidence" value="ECO:0000266"/>
    <property type="project" value="RGD"/>
</dbReference>
<dbReference type="GO" id="GO:0051649">
    <property type="term" value="P:establishment of localization in cell"/>
    <property type="evidence" value="ECO:0000266"/>
    <property type="project" value="RGD"/>
</dbReference>
<dbReference type="GO" id="GO:0030317">
    <property type="term" value="P:flagellated sperm motility"/>
    <property type="evidence" value="ECO:0000266"/>
    <property type="project" value="RGD"/>
</dbReference>
<dbReference type="GO" id="GO:1903566">
    <property type="term" value="P:positive regulation of protein localization to cilium"/>
    <property type="evidence" value="ECO:0000250"/>
    <property type="project" value="UniProtKB"/>
</dbReference>
<dbReference type="GO" id="GO:0045880">
    <property type="term" value="P:positive regulation of smoothened signaling pathway"/>
    <property type="evidence" value="ECO:0000250"/>
    <property type="project" value="UniProtKB"/>
</dbReference>
<dbReference type="GO" id="GO:0008104">
    <property type="term" value="P:protein localization"/>
    <property type="evidence" value="ECO:0000266"/>
    <property type="project" value="RGD"/>
</dbReference>
<dbReference type="GO" id="GO:1904526">
    <property type="term" value="P:regulation of microtubule binding"/>
    <property type="evidence" value="ECO:0000250"/>
    <property type="project" value="UniProtKB"/>
</dbReference>
<dbReference type="InterPro" id="IPR039308">
    <property type="entry name" value="GAS8"/>
</dbReference>
<dbReference type="InterPro" id="IPR025593">
    <property type="entry name" value="GAS8_dom"/>
</dbReference>
<dbReference type="PANTHER" id="PTHR31543">
    <property type="entry name" value="DYNEIN REGULATORY COMPLEX SUBUNIT 4"/>
    <property type="match status" value="1"/>
</dbReference>
<dbReference type="PANTHER" id="PTHR31543:SF0">
    <property type="entry name" value="DYNEIN REGULATORY COMPLEX SUBUNIT 4"/>
    <property type="match status" value="1"/>
</dbReference>
<dbReference type="Pfam" id="PF13851">
    <property type="entry name" value="GAS"/>
    <property type="match status" value="1"/>
</dbReference>
<comment type="function">
    <text evidence="2 3">Component of the nexin-dynein regulatory complex (N-DRC), a key regulator of ciliary/flagellar motility which maintains the alignment and integrity of the distal axoneme and regulates microtubule sliding in motile axonemes. Plays an important role in the assembly of the N-DRC linker. Plays dual roles at both the primary (or non-motile) cilia to regulate hedgehog signaling and in motile cilia to coordinate cilia movement. Required for proper motile cilia functioning. Positively regulates ciliary smoothened (SMO)-dependent Hedgehog (Hh) signaling pathway by facilitating the trafficking of SMO into the cilium and the stimulation of SMO activity in a GRK2-dependent manner.</text>
</comment>
<comment type="subunit">
    <text evidence="1 2 3">Component of the nexin-dynein regulatory complex (N-DRC). Interacts with microtubules (By similarity). Interacts with SMO (By similarity). Interacts (via coiled-coil domains) with RAB3B (in GTP-bound form) (By similarity). Interacts with DRC1 (By similarity). Interacts with DRC7 (By similarity).</text>
</comment>
<comment type="subcellular location">
    <subcellularLocation>
        <location evidence="2">Cytoplasm</location>
    </subcellularLocation>
    <subcellularLocation>
        <location evidence="1">Cytoplasm</location>
        <location evidence="1">Cytoskeleton</location>
    </subcellularLocation>
    <subcellularLocation>
        <location evidence="2">Cell projection</location>
        <location evidence="2">Cilium</location>
        <location evidence="2">Flagellum</location>
    </subcellularLocation>
    <subcellularLocation>
        <location evidence="1">Cytoplasm</location>
        <location evidence="1">Cytoskeleton</location>
        <location evidence="1">Cilium axoneme</location>
    </subcellularLocation>
    <subcellularLocation>
        <location evidence="2">Cytoplasm</location>
        <location evidence="2">Cytoskeleton</location>
        <location evidence="2">Cilium basal body</location>
    </subcellularLocation>
    <subcellularLocation>
        <location evidence="1">Golgi apparatus</location>
    </subcellularLocation>
    <subcellularLocation>
        <location evidence="1">Cell projection</location>
        <location evidence="1">Cilium</location>
    </subcellularLocation>
    <subcellularLocation>
        <location evidence="3">Cytoplasm</location>
        <location evidence="3">Cytoskeleton</location>
        <location evidence="3">Flagellum axoneme</location>
    </subcellularLocation>
    <text evidence="1 2">Associates with microtubules. Localized to the cytoplasm of round spermatids, the tails of elongating spermatids, and mature spermatid tail bundles protruding into the lumen, and in the flagellum of epididymal spermatozoa.</text>
</comment>
<comment type="similarity">
    <text evidence="6">Belongs to the DRC4 family.</text>
</comment>
<accession>Q499U4</accession>
<feature type="chain" id="PRO_0000306332" description="Dynein regulatory complex subunit 4">
    <location>
        <begin position="1"/>
        <end position="478"/>
    </location>
</feature>
<feature type="region of interest" description="Regulates microtubule-binding" evidence="2">
    <location>
        <begin position="1"/>
        <end position="114"/>
    </location>
</feature>
<feature type="region of interest" description="Disordered" evidence="5">
    <location>
        <begin position="1"/>
        <end position="32"/>
    </location>
</feature>
<feature type="region of interest" description="Microtubule-binding" evidence="2">
    <location>
        <begin position="115"/>
        <end position="258"/>
    </location>
</feature>
<feature type="region of interest" description="Interaction with SMO" evidence="1">
    <location>
        <begin position="357"/>
        <end position="478"/>
    </location>
</feature>
<feature type="coiled-coil region" evidence="4">
    <location>
        <begin position="24"/>
        <end position="201"/>
    </location>
</feature>
<feature type="coiled-coil region" evidence="4">
    <location>
        <begin position="243"/>
        <end position="427"/>
    </location>
</feature>
<feature type="compositionally biased region" description="Basic residues" evidence="5">
    <location>
        <begin position="1"/>
        <end position="12"/>
    </location>
</feature>
<protein>
    <recommendedName>
        <fullName evidence="2">Dynein regulatory complex subunit 4</fullName>
    </recommendedName>
    <alternativeName>
        <fullName>Growth arrest-specific protein 11</fullName>
        <shortName>GAS-11</shortName>
    </alternativeName>
    <alternativeName>
        <fullName>Growth arrest-specific protein 8</fullName>
        <shortName>GAS-8</shortName>
    </alternativeName>
</protein>
<reference key="1">
    <citation type="journal article" date="2004" name="Genome Res.">
        <title>The status, quality, and expansion of the NIH full-length cDNA project: the Mammalian Gene Collection (MGC).</title>
        <authorList>
            <consortium name="The MGC Project Team"/>
        </authorList>
    </citation>
    <scope>NUCLEOTIDE SEQUENCE [LARGE SCALE MRNA]</scope>
    <source>
        <tissue>Prostate</tissue>
    </source>
</reference>
<proteinExistence type="evidence at transcript level"/>
<gene>
    <name type="primary">Gas8</name>
    <name evidence="2" type="synonym">Drc4</name>
    <name type="synonym">Gas11</name>
</gene>
<evidence type="ECO:0000250" key="1">
    <source>
        <dbReference type="UniProtKB" id="O95995"/>
    </source>
</evidence>
<evidence type="ECO:0000250" key="2">
    <source>
        <dbReference type="UniProtKB" id="Q60779"/>
    </source>
</evidence>
<evidence type="ECO:0000250" key="3">
    <source>
        <dbReference type="UniProtKB" id="Q7XJ96"/>
    </source>
</evidence>
<evidence type="ECO:0000255" key="4"/>
<evidence type="ECO:0000256" key="5">
    <source>
        <dbReference type="SAM" id="MobiDB-lite"/>
    </source>
</evidence>
<evidence type="ECO:0000305" key="6"/>
<name>DRC4_RAT</name>
<sequence length="478" mass="56313">MAPKRRGKKGKAKGNAVVDGVAPEDMSKEQVEEHVARIREELDREREERNYFQLERDKIHTFWEITRRQLEEKKAELRNKDREMEEAEERHQVEIKVYKQKVKHLLYEHQNNLAEVKTEGTVVMKLAQKEHRAQEGALRKDMRVLKVELKEQELANEVVIKNLRLKQAEEITKMRNDFERQVREIEAKYDKKMKMLRDELDLRRKTEIHEVEERKNGQISTLMQRHEEAFTDIKNYYNDITLNNLALINSLKEQMEDMRKKEEYLEREMAEVSLQNKRLAEPLQRAKEEMSEMQKRLGNHERDKQILACTKARLKVTEKELKDLKWEHEILEQRFIKVQQEREELYRKFTAAIQEVQQKTGFKNLVLERKLQALNAAVEKREVQFNEVLAASNLDPTALTLVSRKLEDVLESKNTTIKDLQYELARVCKAHNDLLRTYEAKLLAFGIPLDNVGFKPLETAVIGQTLGQGPAGLVGAPT</sequence>